<proteinExistence type="inferred from homology"/>
<accession>Q0W674</accession>
<sequence length="65" mass="7368">MGSIRQTYIKSTTDALLRQYPNEFGSDFTANKAKVEQLASVQTKEVRNRIAGYVTRKMASKGRKK</sequence>
<reference key="1">
    <citation type="journal article" date="2006" name="Science">
        <title>Genome of rice cluster I archaea -- the key methane producers in the rice rhizosphere.</title>
        <authorList>
            <person name="Erkel C."/>
            <person name="Kube M."/>
            <person name="Reinhardt R."/>
            <person name="Liesack W."/>
        </authorList>
    </citation>
    <scope>NUCLEOTIDE SEQUENCE [LARGE SCALE GENOMIC DNA]</scope>
    <source>
        <strain>DSM 22066 / NBRC 105507 / MRE50</strain>
    </source>
</reference>
<feature type="chain" id="PRO_1000050633" description="Small ribosomal subunit protein eS17">
    <location>
        <begin position="1"/>
        <end position="65"/>
    </location>
</feature>
<evidence type="ECO:0000255" key="1">
    <source>
        <dbReference type="HAMAP-Rule" id="MF_00511"/>
    </source>
</evidence>
<evidence type="ECO:0000305" key="2"/>
<organism>
    <name type="scientific">Methanocella arvoryzae (strain DSM 22066 / NBRC 105507 / MRE50)</name>
    <dbReference type="NCBI Taxonomy" id="351160"/>
    <lineage>
        <taxon>Archaea</taxon>
        <taxon>Methanobacteriati</taxon>
        <taxon>Methanobacteriota</taxon>
        <taxon>Stenosarchaea group</taxon>
        <taxon>Methanomicrobia</taxon>
        <taxon>Methanocellales</taxon>
        <taxon>Methanocellaceae</taxon>
        <taxon>Methanocella</taxon>
    </lineage>
</organism>
<protein>
    <recommendedName>
        <fullName evidence="1">Small ribosomal subunit protein eS17</fullName>
    </recommendedName>
    <alternativeName>
        <fullName evidence="2">30S ribosomal protein S17e</fullName>
    </alternativeName>
</protein>
<comment type="similarity">
    <text evidence="1">Belongs to the eukaryotic ribosomal protein eS17 family.</text>
</comment>
<name>RS17E_METAR</name>
<dbReference type="EMBL" id="AM114193">
    <property type="protein sequence ID" value="CAJ36119.1"/>
    <property type="molecule type" value="Genomic_DNA"/>
</dbReference>
<dbReference type="RefSeq" id="WP_012036390.1">
    <property type="nucleotide sequence ID" value="NC_009464.1"/>
</dbReference>
<dbReference type="SMR" id="Q0W674"/>
<dbReference type="STRING" id="351160.RCIX737"/>
<dbReference type="GeneID" id="5144060"/>
<dbReference type="KEGG" id="rci:RCIX737"/>
<dbReference type="PATRIC" id="fig|351160.9.peg.2121"/>
<dbReference type="eggNOG" id="arCOG01885">
    <property type="taxonomic scope" value="Archaea"/>
</dbReference>
<dbReference type="OrthoDB" id="52479at2157"/>
<dbReference type="Proteomes" id="UP000000663">
    <property type="component" value="Chromosome"/>
</dbReference>
<dbReference type="GO" id="GO:0005829">
    <property type="term" value="C:cytosol"/>
    <property type="evidence" value="ECO:0007669"/>
    <property type="project" value="UniProtKB-ARBA"/>
</dbReference>
<dbReference type="GO" id="GO:1990904">
    <property type="term" value="C:ribonucleoprotein complex"/>
    <property type="evidence" value="ECO:0007669"/>
    <property type="project" value="UniProtKB-KW"/>
</dbReference>
<dbReference type="GO" id="GO:0005840">
    <property type="term" value="C:ribosome"/>
    <property type="evidence" value="ECO:0007669"/>
    <property type="project" value="UniProtKB-KW"/>
</dbReference>
<dbReference type="GO" id="GO:0003735">
    <property type="term" value="F:structural constituent of ribosome"/>
    <property type="evidence" value="ECO:0007669"/>
    <property type="project" value="InterPro"/>
</dbReference>
<dbReference type="GO" id="GO:0006412">
    <property type="term" value="P:translation"/>
    <property type="evidence" value="ECO:0007669"/>
    <property type="project" value="UniProtKB-UniRule"/>
</dbReference>
<dbReference type="Gene3D" id="1.10.60.20">
    <property type="entry name" value="Ribosomal protein S17e-like"/>
    <property type="match status" value="1"/>
</dbReference>
<dbReference type="HAMAP" id="MF_00511">
    <property type="entry name" value="Ribosomal_eS17"/>
    <property type="match status" value="1"/>
</dbReference>
<dbReference type="InterPro" id="IPR001210">
    <property type="entry name" value="Ribosomal_eS17"/>
</dbReference>
<dbReference type="InterPro" id="IPR018273">
    <property type="entry name" value="Ribosomal_eS17_CS"/>
</dbReference>
<dbReference type="InterPro" id="IPR036401">
    <property type="entry name" value="Ribosomal_eS17_sf"/>
</dbReference>
<dbReference type="NCBIfam" id="NF002242">
    <property type="entry name" value="PRK01151.1"/>
    <property type="match status" value="1"/>
</dbReference>
<dbReference type="PANTHER" id="PTHR10732">
    <property type="entry name" value="40S RIBOSOMAL PROTEIN S17"/>
    <property type="match status" value="1"/>
</dbReference>
<dbReference type="PANTHER" id="PTHR10732:SF0">
    <property type="entry name" value="40S RIBOSOMAL PROTEIN S17"/>
    <property type="match status" value="1"/>
</dbReference>
<dbReference type="Pfam" id="PF00833">
    <property type="entry name" value="Ribosomal_S17e"/>
    <property type="match status" value="1"/>
</dbReference>
<dbReference type="SUPFAM" id="SSF116820">
    <property type="entry name" value="Rps17e-like"/>
    <property type="match status" value="1"/>
</dbReference>
<dbReference type="PROSITE" id="PS00712">
    <property type="entry name" value="RIBOSOMAL_S17E"/>
    <property type="match status" value="1"/>
</dbReference>
<keyword id="KW-1185">Reference proteome</keyword>
<keyword id="KW-0687">Ribonucleoprotein</keyword>
<keyword id="KW-0689">Ribosomal protein</keyword>
<gene>
    <name evidence="1" type="primary">rps17e</name>
    <name type="ordered locus">UNCMA_20670</name>
    <name type="ORF">RCIX737</name>
</gene>